<feature type="chain" id="PRO_0000138338" description="UvrABC system protein C">
    <location>
        <begin position="1"/>
        <end position="593"/>
    </location>
</feature>
<feature type="domain" description="GIY-YIG" evidence="1">
    <location>
        <begin position="17"/>
        <end position="94"/>
    </location>
</feature>
<feature type="domain" description="UVR" evidence="1">
    <location>
        <begin position="199"/>
        <end position="234"/>
    </location>
</feature>
<comment type="function">
    <text evidence="1">The UvrABC repair system catalyzes the recognition and processing of DNA lesions. UvrC both incises the 5' and 3' sides of the lesion. The N-terminal half is responsible for the 3' incision and the C-terminal half is responsible for the 5' incision.</text>
</comment>
<comment type="subunit">
    <text evidence="1">Interacts with UvrB in an incision complex.</text>
</comment>
<comment type="subcellular location">
    <subcellularLocation>
        <location evidence="1">Cytoplasm</location>
    </subcellularLocation>
</comment>
<comment type="similarity">
    <text evidence="1">Belongs to the UvrC family.</text>
</comment>
<keyword id="KW-0963">Cytoplasm</keyword>
<keyword id="KW-0227">DNA damage</keyword>
<keyword id="KW-0228">DNA excision</keyword>
<keyword id="KW-0234">DNA repair</keyword>
<keyword id="KW-0267">Excision nuclease</keyword>
<keyword id="KW-0742">SOS response</keyword>
<evidence type="ECO:0000255" key="1">
    <source>
        <dbReference type="HAMAP-Rule" id="MF_00203"/>
    </source>
</evidence>
<accession>P67429</accession>
<accession>Q99UW0</accession>
<sequence length="593" mass="68687">MEDYKQRIKNKLNVVPMEPGCYLMKDRNDQVIYVGKAKKLRNRLRSYFTGAHDAKTTRLVGEIRRFEFIVTSSETESLLLELNLIKQYQPRYNILLKDDKSYPFIKITKEKYPRLLVTRTVKQGTGKYFGPYPNAYSAQETKKLLDRIYPYRKCDKMPDKLCLYYHIGQCLGPCVYDVDLSKYAQMTKEITDFLNGEDKTILKSLEERMLTASESLDFERAKEYRDLIQHIQNLTNKQKIMSSDKTIRDVFGYCVDKGWMCIQVFFIRQGNMIKRDTTMIPLQQTEEEEFYTFIGQFYSLNQHILPKEVHVPRNLDKEMIQSVVDTKIVQPARGPKKDMVDLAAHNAKVSLNNKFELISRDESRTIKAIEELGTQMGIQTPIRIEAFDNSNIQGVDPVSAMVTFVDGKPDKKNYRKYKIKTVKGPDDYKSMREVVRRRYSRVLNEGLPLPDLIIVDGGKGHMNGVIDVLQNELGLDIPVAGLQKNDKHQTSELLYGASAEIVPLKKNSQAFYLLHRIQDEVHRFAITFHRQTRQKTGLKSILDDIDGIGNKRKTLLLRSFGSIKKMKEATLEDFKNIGIPENVAKNLHEQLHK</sequence>
<dbReference type="EMBL" id="BA000018">
    <property type="protein sequence ID" value="BAB42242.1"/>
    <property type="molecule type" value="Genomic_DNA"/>
</dbReference>
<dbReference type="PIR" id="F89885">
    <property type="entry name" value="F89885"/>
</dbReference>
<dbReference type="RefSeq" id="WP_000390524.1">
    <property type="nucleotide sequence ID" value="NC_002745.2"/>
</dbReference>
<dbReference type="SMR" id="P67429"/>
<dbReference type="EnsemblBacteria" id="BAB42242">
    <property type="protein sequence ID" value="BAB42242"/>
    <property type="gene ID" value="BAB42242"/>
</dbReference>
<dbReference type="KEGG" id="sau:SA0993"/>
<dbReference type="HOGENOM" id="CLU_014841_3_2_9"/>
<dbReference type="GO" id="GO:0005737">
    <property type="term" value="C:cytoplasm"/>
    <property type="evidence" value="ECO:0007669"/>
    <property type="project" value="UniProtKB-SubCell"/>
</dbReference>
<dbReference type="GO" id="GO:0009380">
    <property type="term" value="C:excinuclease repair complex"/>
    <property type="evidence" value="ECO:0007669"/>
    <property type="project" value="InterPro"/>
</dbReference>
<dbReference type="GO" id="GO:0003677">
    <property type="term" value="F:DNA binding"/>
    <property type="evidence" value="ECO:0007669"/>
    <property type="project" value="UniProtKB-UniRule"/>
</dbReference>
<dbReference type="GO" id="GO:0009381">
    <property type="term" value="F:excinuclease ABC activity"/>
    <property type="evidence" value="ECO:0007669"/>
    <property type="project" value="UniProtKB-UniRule"/>
</dbReference>
<dbReference type="GO" id="GO:0006289">
    <property type="term" value="P:nucleotide-excision repair"/>
    <property type="evidence" value="ECO:0007669"/>
    <property type="project" value="UniProtKB-UniRule"/>
</dbReference>
<dbReference type="GO" id="GO:0009432">
    <property type="term" value="P:SOS response"/>
    <property type="evidence" value="ECO:0007669"/>
    <property type="project" value="UniProtKB-UniRule"/>
</dbReference>
<dbReference type="CDD" id="cd10434">
    <property type="entry name" value="GIY-YIG_UvrC_Cho"/>
    <property type="match status" value="1"/>
</dbReference>
<dbReference type="FunFam" id="3.30.420.340:FF:000002">
    <property type="entry name" value="UvrABC system protein C"/>
    <property type="match status" value="1"/>
</dbReference>
<dbReference type="FunFam" id="3.40.1440.10:FF:000001">
    <property type="entry name" value="UvrABC system protein C"/>
    <property type="match status" value="1"/>
</dbReference>
<dbReference type="FunFam" id="4.10.860.10:FF:000007">
    <property type="entry name" value="UvrABC system protein C"/>
    <property type="match status" value="1"/>
</dbReference>
<dbReference type="Gene3D" id="1.10.150.20">
    <property type="entry name" value="5' to 3' exonuclease, C-terminal subdomain"/>
    <property type="match status" value="1"/>
</dbReference>
<dbReference type="Gene3D" id="3.40.1440.10">
    <property type="entry name" value="GIY-YIG endonuclease"/>
    <property type="match status" value="1"/>
</dbReference>
<dbReference type="Gene3D" id="4.10.860.10">
    <property type="entry name" value="UVR domain"/>
    <property type="match status" value="1"/>
</dbReference>
<dbReference type="Gene3D" id="3.30.420.340">
    <property type="entry name" value="UvrC, RNAse H endonuclease domain"/>
    <property type="match status" value="1"/>
</dbReference>
<dbReference type="HAMAP" id="MF_00203">
    <property type="entry name" value="UvrC"/>
    <property type="match status" value="1"/>
</dbReference>
<dbReference type="InterPro" id="IPR000305">
    <property type="entry name" value="GIY-YIG_endonuc"/>
</dbReference>
<dbReference type="InterPro" id="IPR035901">
    <property type="entry name" value="GIY-YIG_endonuc_sf"/>
</dbReference>
<dbReference type="InterPro" id="IPR047296">
    <property type="entry name" value="GIY-YIG_UvrC_Cho"/>
</dbReference>
<dbReference type="InterPro" id="IPR010994">
    <property type="entry name" value="RuvA_2-like"/>
</dbReference>
<dbReference type="InterPro" id="IPR001943">
    <property type="entry name" value="UVR_dom"/>
</dbReference>
<dbReference type="InterPro" id="IPR036876">
    <property type="entry name" value="UVR_dom_sf"/>
</dbReference>
<dbReference type="InterPro" id="IPR050066">
    <property type="entry name" value="UvrABC_protein_C"/>
</dbReference>
<dbReference type="InterPro" id="IPR004791">
    <property type="entry name" value="UvrC"/>
</dbReference>
<dbReference type="InterPro" id="IPR001162">
    <property type="entry name" value="UvrC_RNase_H_dom"/>
</dbReference>
<dbReference type="InterPro" id="IPR038476">
    <property type="entry name" value="UvrC_RNase_H_dom_sf"/>
</dbReference>
<dbReference type="NCBIfam" id="TIGR00194">
    <property type="entry name" value="uvrC"/>
    <property type="match status" value="1"/>
</dbReference>
<dbReference type="PANTHER" id="PTHR30562:SF1">
    <property type="entry name" value="UVRABC SYSTEM PROTEIN C"/>
    <property type="match status" value="1"/>
</dbReference>
<dbReference type="PANTHER" id="PTHR30562">
    <property type="entry name" value="UVRC/OXIDOREDUCTASE"/>
    <property type="match status" value="1"/>
</dbReference>
<dbReference type="Pfam" id="PF01541">
    <property type="entry name" value="GIY-YIG"/>
    <property type="match status" value="1"/>
</dbReference>
<dbReference type="Pfam" id="PF02151">
    <property type="entry name" value="UVR"/>
    <property type="match status" value="1"/>
</dbReference>
<dbReference type="Pfam" id="PF22920">
    <property type="entry name" value="UvrC_RNaseH"/>
    <property type="match status" value="1"/>
</dbReference>
<dbReference type="Pfam" id="PF08459">
    <property type="entry name" value="UvrC_RNaseH_dom"/>
    <property type="match status" value="1"/>
</dbReference>
<dbReference type="SMART" id="SM00465">
    <property type="entry name" value="GIYc"/>
    <property type="match status" value="1"/>
</dbReference>
<dbReference type="SUPFAM" id="SSF46600">
    <property type="entry name" value="C-terminal UvrC-binding domain of UvrB"/>
    <property type="match status" value="1"/>
</dbReference>
<dbReference type="SUPFAM" id="SSF82771">
    <property type="entry name" value="GIY-YIG endonuclease"/>
    <property type="match status" value="1"/>
</dbReference>
<dbReference type="SUPFAM" id="SSF47781">
    <property type="entry name" value="RuvA domain 2-like"/>
    <property type="match status" value="1"/>
</dbReference>
<dbReference type="PROSITE" id="PS50164">
    <property type="entry name" value="GIY_YIG"/>
    <property type="match status" value="1"/>
</dbReference>
<dbReference type="PROSITE" id="PS50151">
    <property type="entry name" value="UVR"/>
    <property type="match status" value="1"/>
</dbReference>
<dbReference type="PROSITE" id="PS50165">
    <property type="entry name" value="UVRC"/>
    <property type="match status" value="1"/>
</dbReference>
<protein>
    <recommendedName>
        <fullName evidence="1">UvrABC system protein C</fullName>
        <shortName evidence="1">Protein UvrC</shortName>
    </recommendedName>
    <alternativeName>
        <fullName evidence="1">Excinuclease ABC subunit C</fullName>
    </alternativeName>
</protein>
<organism>
    <name type="scientific">Staphylococcus aureus (strain N315)</name>
    <dbReference type="NCBI Taxonomy" id="158879"/>
    <lineage>
        <taxon>Bacteria</taxon>
        <taxon>Bacillati</taxon>
        <taxon>Bacillota</taxon>
        <taxon>Bacilli</taxon>
        <taxon>Bacillales</taxon>
        <taxon>Staphylococcaceae</taxon>
        <taxon>Staphylococcus</taxon>
    </lineage>
</organism>
<name>UVRC_STAAN</name>
<reference key="1">
    <citation type="journal article" date="2001" name="Lancet">
        <title>Whole genome sequencing of meticillin-resistant Staphylococcus aureus.</title>
        <authorList>
            <person name="Kuroda M."/>
            <person name="Ohta T."/>
            <person name="Uchiyama I."/>
            <person name="Baba T."/>
            <person name="Yuzawa H."/>
            <person name="Kobayashi I."/>
            <person name="Cui L."/>
            <person name="Oguchi A."/>
            <person name="Aoki K."/>
            <person name="Nagai Y."/>
            <person name="Lian J.-Q."/>
            <person name="Ito T."/>
            <person name="Kanamori M."/>
            <person name="Matsumaru H."/>
            <person name="Maruyama A."/>
            <person name="Murakami H."/>
            <person name="Hosoyama A."/>
            <person name="Mizutani-Ui Y."/>
            <person name="Takahashi N.K."/>
            <person name="Sawano T."/>
            <person name="Inoue R."/>
            <person name="Kaito C."/>
            <person name="Sekimizu K."/>
            <person name="Hirakawa H."/>
            <person name="Kuhara S."/>
            <person name="Goto S."/>
            <person name="Yabuzaki J."/>
            <person name="Kanehisa M."/>
            <person name="Yamashita A."/>
            <person name="Oshima K."/>
            <person name="Furuya K."/>
            <person name="Yoshino C."/>
            <person name="Shiba T."/>
            <person name="Hattori M."/>
            <person name="Ogasawara N."/>
            <person name="Hayashi H."/>
            <person name="Hiramatsu K."/>
        </authorList>
    </citation>
    <scope>NUCLEOTIDE SEQUENCE [LARGE SCALE GENOMIC DNA]</scope>
    <source>
        <strain>N315</strain>
    </source>
</reference>
<proteinExistence type="inferred from homology"/>
<gene>
    <name evidence="1" type="primary">uvrC</name>
    <name type="ordered locus">SA0993</name>
</gene>